<proteinExistence type="evidence at protein level"/>
<name>AVP1_ARATH</name>
<protein>
    <recommendedName>
        <fullName>Pyrophosphate-energized vacuolar membrane proton pump 1</fullName>
        <ecNumber evidence="9">7.1.3.1</ecNumber>
    </recommendedName>
    <alternativeName>
        <fullName>Pyrophosphate-energized inorganic pyrophosphatase 1</fullName>
        <shortName>H(+)-PPase 1</shortName>
    </alternativeName>
    <alternativeName>
        <fullName>Vacuolar proton pyrophosphatase 1</fullName>
    </alternativeName>
    <alternativeName>
        <fullName>Vacuolar proton pyrophosphatase 3</fullName>
    </alternativeName>
</protein>
<reference key="1">
    <citation type="journal article" date="1992" name="Proc. Natl. Acad. Sci. U.S.A.">
        <title>Molecular cloning and sequence of cDNA encoding the pyrophosphate-energized vacuolar membrane proton pump of Arabidopsis thaliana.</title>
        <authorList>
            <person name="Sarafian V."/>
            <person name="Kim Y."/>
            <person name="Poole R.J."/>
            <person name="Rea P.A."/>
        </authorList>
    </citation>
    <scope>NUCLEOTIDE SEQUENCE [MRNA]</scope>
    <source>
        <strain>cv. Columbia</strain>
    </source>
</reference>
<reference key="2">
    <citation type="journal article" date="2001" name="Plant Mol. Biol.">
        <title>Pollen-specific regulation of vacuolar H(+)-PPase expression by multiple cis-acting elements.</title>
        <authorList>
            <person name="Mitsuda N."/>
            <person name="Takeyasu K."/>
            <person name="Sato M.H."/>
        </authorList>
    </citation>
    <scope>NUCLEOTIDE SEQUENCE [GENOMIC DNA]</scope>
    <scope>TISSUE SPECIFICITY</scope>
    <scope>INDUCTION</scope>
    <scope>DEVELOPMENTAL STAGE</scope>
    <source>
        <strain>cv. Columbia</strain>
        <tissue>Leaf</tissue>
    </source>
</reference>
<reference key="3">
    <citation type="journal article" date="2000" name="Nature">
        <title>Sequence and analysis of chromosome 1 of the plant Arabidopsis thaliana.</title>
        <authorList>
            <person name="Theologis A."/>
            <person name="Ecker J.R."/>
            <person name="Palm C.J."/>
            <person name="Federspiel N.A."/>
            <person name="Kaul S."/>
            <person name="White O."/>
            <person name="Alonso J."/>
            <person name="Altafi H."/>
            <person name="Araujo R."/>
            <person name="Bowman C.L."/>
            <person name="Brooks S.Y."/>
            <person name="Buehler E."/>
            <person name="Chan A."/>
            <person name="Chao Q."/>
            <person name="Chen H."/>
            <person name="Cheuk R.F."/>
            <person name="Chin C.W."/>
            <person name="Chung M.K."/>
            <person name="Conn L."/>
            <person name="Conway A.B."/>
            <person name="Conway A.R."/>
            <person name="Creasy T.H."/>
            <person name="Dewar K."/>
            <person name="Dunn P."/>
            <person name="Etgu P."/>
            <person name="Feldblyum T.V."/>
            <person name="Feng J.-D."/>
            <person name="Fong B."/>
            <person name="Fujii C.Y."/>
            <person name="Gill J.E."/>
            <person name="Goldsmith A.D."/>
            <person name="Haas B."/>
            <person name="Hansen N.F."/>
            <person name="Hughes B."/>
            <person name="Huizar L."/>
            <person name="Hunter J.L."/>
            <person name="Jenkins J."/>
            <person name="Johnson-Hopson C."/>
            <person name="Khan S."/>
            <person name="Khaykin E."/>
            <person name="Kim C.J."/>
            <person name="Koo H.L."/>
            <person name="Kremenetskaia I."/>
            <person name="Kurtz D.B."/>
            <person name="Kwan A."/>
            <person name="Lam B."/>
            <person name="Langin-Hooper S."/>
            <person name="Lee A."/>
            <person name="Lee J.M."/>
            <person name="Lenz C.A."/>
            <person name="Li J.H."/>
            <person name="Li Y.-P."/>
            <person name="Lin X."/>
            <person name="Liu S.X."/>
            <person name="Liu Z.A."/>
            <person name="Luros J.S."/>
            <person name="Maiti R."/>
            <person name="Marziali A."/>
            <person name="Militscher J."/>
            <person name="Miranda M."/>
            <person name="Nguyen M."/>
            <person name="Nierman W.C."/>
            <person name="Osborne B.I."/>
            <person name="Pai G."/>
            <person name="Peterson J."/>
            <person name="Pham P.K."/>
            <person name="Rizzo M."/>
            <person name="Rooney T."/>
            <person name="Rowley D."/>
            <person name="Sakano H."/>
            <person name="Salzberg S.L."/>
            <person name="Schwartz J.R."/>
            <person name="Shinn P."/>
            <person name="Southwick A.M."/>
            <person name="Sun H."/>
            <person name="Tallon L.J."/>
            <person name="Tambunga G."/>
            <person name="Toriumi M.J."/>
            <person name="Town C.D."/>
            <person name="Utterback T."/>
            <person name="Van Aken S."/>
            <person name="Vaysberg M."/>
            <person name="Vysotskaia V.S."/>
            <person name="Walker M."/>
            <person name="Wu D."/>
            <person name="Yu G."/>
            <person name="Fraser C.M."/>
            <person name="Venter J.C."/>
            <person name="Davis R.W."/>
        </authorList>
    </citation>
    <scope>NUCLEOTIDE SEQUENCE [LARGE SCALE GENOMIC DNA]</scope>
    <source>
        <strain>cv. Columbia</strain>
    </source>
</reference>
<reference key="4">
    <citation type="journal article" date="2017" name="Plant J.">
        <title>Araport11: a complete reannotation of the Arabidopsis thaliana reference genome.</title>
        <authorList>
            <person name="Cheng C.Y."/>
            <person name="Krishnakumar V."/>
            <person name="Chan A.P."/>
            <person name="Thibaud-Nissen F."/>
            <person name="Schobel S."/>
            <person name="Town C.D."/>
        </authorList>
    </citation>
    <scope>GENOME REANNOTATION</scope>
    <source>
        <strain>cv. Columbia</strain>
    </source>
</reference>
<reference key="5">
    <citation type="journal article" date="2003" name="Science">
        <title>Empirical analysis of transcriptional activity in the Arabidopsis genome.</title>
        <authorList>
            <person name="Yamada K."/>
            <person name="Lim J."/>
            <person name="Dale J.M."/>
            <person name="Chen H."/>
            <person name="Shinn P."/>
            <person name="Palm C.J."/>
            <person name="Southwick A.M."/>
            <person name="Wu H.C."/>
            <person name="Kim C.J."/>
            <person name="Nguyen M."/>
            <person name="Pham P.K."/>
            <person name="Cheuk R.F."/>
            <person name="Karlin-Newmann G."/>
            <person name="Liu S.X."/>
            <person name="Lam B."/>
            <person name="Sakano H."/>
            <person name="Wu T."/>
            <person name="Yu G."/>
            <person name="Miranda M."/>
            <person name="Quach H.L."/>
            <person name="Tripp M."/>
            <person name="Chang C.H."/>
            <person name="Lee J.M."/>
            <person name="Toriumi M.J."/>
            <person name="Chan M.M."/>
            <person name="Tang C.C."/>
            <person name="Onodera C.S."/>
            <person name="Deng J.M."/>
            <person name="Akiyama K."/>
            <person name="Ansari Y."/>
            <person name="Arakawa T."/>
            <person name="Banh J."/>
            <person name="Banno F."/>
            <person name="Bowser L."/>
            <person name="Brooks S.Y."/>
            <person name="Carninci P."/>
            <person name="Chao Q."/>
            <person name="Choy N."/>
            <person name="Enju A."/>
            <person name="Goldsmith A.D."/>
            <person name="Gurjal M."/>
            <person name="Hansen N.F."/>
            <person name="Hayashizaki Y."/>
            <person name="Johnson-Hopson C."/>
            <person name="Hsuan V.W."/>
            <person name="Iida K."/>
            <person name="Karnes M."/>
            <person name="Khan S."/>
            <person name="Koesema E."/>
            <person name="Ishida J."/>
            <person name="Jiang P.X."/>
            <person name="Jones T."/>
            <person name="Kawai J."/>
            <person name="Kamiya A."/>
            <person name="Meyers C."/>
            <person name="Nakajima M."/>
            <person name="Narusaka M."/>
            <person name="Seki M."/>
            <person name="Sakurai T."/>
            <person name="Satou M."/>
            <person name="Tamse R."/>
            <person name="Vaysberg M."/>
            <person name="Wallender E.K."/>
            <person name="Wong C."/>
            <person name="Yamamura Y."/>
            <person name="Yuan S."/>
            <person name="Shinozaki K."/>
            <person name="Davis R.W."/>
            <person name="Theologis A."/>
            <person name="Ecker J.R."/>
        </authorList>
    </citation>
    <scope>NUCLEOTIDE SEQUENCE [LARGE SCALE MRNA]</scope>
    <source>
        <strain>cv. Columbia</strain>
    </source>
</reference>
<reference key="6">
    <citation type="journal article" date="1993" name="Plant J.">
        <title>An inventory of 1152 expressed sequence tags obtained by partial sequencing of cDNAs from Arabidopsis thaliana.</title>
        <authorList>
            <person name="Hoefte H."/>
            <person name="Desprez T."/>
            <person name="Amselem J."/>
            <person name="Chiapello H."/>
            <person name="Rouze P."/>
            <person name="Caboche M."/>
            <person name="Moisan A."/>
            <person name="Jourjon M.-F."/>
            <person name="Charpenteau J.-L."/>
            <person name="Berthomieu P."/>
            <person name="Guerrier D."/>
            <person name="Giraudat J."/>
            <person name="Quigley F."/>
            <person name="Thomas F."/>
            <person name="Yu D.-Y."/>
            <person name="Mache R."/>
            <person name="Raynal M."/>
            <person name="Cooke R."/>
            <person name="Grellet F."/>
            <person name="Delseny M."/>
            <person name="Parmentier Y."/>
            <person name="de Marcillac G."/>
            <person name="Gigot C."/>
            <person name="Fleck J."/>
            <person name="Philipps G."/>
            <person name="Axelos M."/>
            <person name="Bardet C."/>
            <person name="Tremousaygue D."/>
            <person name="Lescure B."/>
        </authorList>
    </citation>
    <scope>NUCLEOTIDE SEQUENCE [LARGE SCALE MRNA] OF 554-671 AND 716-770</scope>
    <source>
        <strain>cv. Columbia</strain>
        <tissue>Green siliques</tissue>
    </source>
</reference>
<reference key="7">
    <citation type="submission" date="2005-03" db="EMBL/GenBank/DDBJ databases">
        <title>Large-scale analysis of RIKEN Arabidopsis full-length (RAFL) cDNAs.</title>
        <authorList>
            <person name="Totoki Y."/>
            <person name="Seki M."/>
            <person name="Ishida J."/>
            <person name="Nakajima M."/>
            <person name="Enju A."/>
            <person name="Kamiya A."/>
            <person name="Narusaka M."/>
            <person name="Shin-i T."/>
            <person name="Nakagawa M."/>
            <person name="Sakamoto N."/>
            <person name="Oishi K."/>
            <person name="Kohara Y."/>
            <person name="Kobayashi M."/>
            <person name="Toyoda A."/>
            <person name="Sakaki Y."/>
            <person name="Sakurai T."/>
            <person name="Iida K."/>
            <person name="Akiyama K."/>
            <person name="Satou M."/>
            <person name="Toyoda T."/>
            <person name="Konagaya A."/>
            <person name="Carninci P."/>
            <person name="Kawai J."/>
            <person name="Hayashizaki Y."/>
            <person name="Shinozaki K."/>
        </authorList>
    </citation>
    <scope>NUCLEOTIDE SEQUENCE [LARGE SCALE MRNA] OF 595-770</scope>
    <source>
        <strain>cv. Columbia</strain>
    </source>
</reference>
<reference key="8">
    <citation type="journal article" date="1994" name="J. Biol. Chem.">
        <title>Localization of cytosolically oriented maleimide-reactive domain of vacuolar H(+)-pyrophosphatase.</title>
        <authorList>
            <person name="Zhen R.-G."/>
            <person name="Kim E.J."/>
            <person name="Rea P.A."/>
        </authorList>
    </citation>
    <scope>PROTEIN SEQUENCE OF 625-640</scope>
    <scope>ACTIVITY REGULATION</scope>
</reference>
<reference key="9">
    <citation type="journal article" date="1994" name="Proc. Natl. Acad. Sci. U.S.A.">
        <title>Heterologous expression of plant vacuolar pyrophosphatase in yeast demonstrates sufficiency of the substrate-binding subunit for proton transport.</title>
        <authorList>
            <person name="Kim E.J."/>
            <person name="Zhen R.-G."/>
            <person name="Rea P.A."/>
        </authorList>
    </citation>
    <scope>FUNCTION</scope>
    <scope>SUBCELLULAR LOCATION</scope>
    <scope>ACTIVITY REGULATION</scope>
</reference>
<reference key="10">
    <citation type="journal article" date="1995" name="J. Biol. Chem.">
        <title>Site-directed mutagenesis of vacuolar H(+)-pyrophosphatase. Necessity of Cys634 for inhibition by maleimides but not catalysis.</title>
        <authorList>
            <person name="Kim E.J."/>
            <person name="Zhen R.-G."/>
            <person name="Rea P.A."/>
        </authorList>
    </citation>
    <scope>MUTAGENESIS OF CYS-634</scope>
    <scope>BIOPHYSICOCHEMICAL PROPERTIES</scope>
</reference>
<reference key="11">
    <citation type="journal article" date="1997" name="J. Biol. Chem.">
        <title>Acidic residues necessary for pyrophosphate-energized pumping and inhibition of the vacuolar H(+)-pyrophosphatase by N,N'-dicyclohexylcarbodiimide.</title>
        <authorList>
            <person name="Zhen R.-G."/>
            <person name="Kim E.J."/>
            <person name="Rea P.A."/>
        </authorList>
    </citation>
    <scope>ACTIVITY REGULATION</scope>
    <scope>MUTAGENESIS OF GLU-119; GLU-229; GLU-305; GLU-427; ASP-504; ASP-573; GLU-667 AND GLU-751</scope>
</reference>
<reference key="12">
    <citation type="journal article" date="2000" name="Plant Physiol.">
        <title>AVP2, a sequence-divergent, K(+)-insensitive H(+)-translocating inorganic pyrophosphatase from Arabidopsis.</title>
        <authorList>
            <person name="Drozdowicz Y.M."/>
            <person name="Kissinger J.C."/>
            <person name="Rea P.A."/>
        </authorList>
    </citation>
    <scope>ACTIVITY REGULATION</scope>
    <scope>BIOPHYSICOCHEMICAL PROPERTIES</scope>
    <source>
        <strain>cv. Columbia</strain>
    </source>
</reference>
<reference key="13">
    <citation type="journal article" date="2001" name="Proc. Natl. Acad. Sci. U.S.A.">
        <title>Drought- and salt-tolerant plants result from overexpression of the AVP1 H(+)-pump.</title>
        <authorList>
            <person name="Gaxiola R.A."/>
            <person name="Li J."/>
            <person name="Undurraga S."/>
            <person name="Dang L.M."/>
            <person name="Allen G.J."/>
            <person name="Alper S.L."/>
            <person name="Fink G.R."/>
        </authorList>
    </citation>
    <scope>FUNCTION</scope>
</reference>
<reference key="14">
    <citation type="journal article" date="2003" name="Plant Cell Physiol.">
        <title>Arabidopsis CAMTA family proteins enhance V-PPase expression in pollen.</title>
        <authorList>
            <person name="Mitsuda N."/>
            <person name="Isono T."/>
            <person name="Sato M.H."/>
        </authorList>
    </citation>
    <scope>INDUCTION</scope>
</reference>
<reference key="15">
    <citation type="journal article" date="2005" name="Science">
        <title>Arabidopsis H(+)-PPase AVP1 regulates auxin-mediated organ development.</title>
        <authorList>
            <person name="Li J."/>
            <person name="Yang H."/>
            <person name="Peer W.A."/>
            <person name="Richter G."/>
            <person name="Blakeslee J."/>
            <person name="Bandyopadhyay A."/>
            <person name="Titapiwantakun B."/>
            <person name="Undurraga S."/>
            <person name="Khodakovskaya M."/>
            <person name="Richards E.L."/>
            <person name="Krizek B."/>
            <person name="Murphy A.S."/>
            <person name="Gilroy S."/>
            <person name="Gaxiola R."/>
        </authorList>
    </citation>
    <scope>FUNCTION</scope>
    <scope>SUBCELLULAR LOCATION</scope>
    <scope>TISSUE SPECIFICITY</scope>
    <scope>DEVELOPMENTAL STAGE</scope>
</reference>
<reference key="16">
    <citation type="journal article" date="2007" name="Mol. Cell. Proteomics">
        <title>A proteomics dissection of Arabidopsis thaliana vacuoles isolated from cell culture.</title>
        <authorList>
            <person name="Jaquinod M."/>
            <person name="Villiers F."/>
            <person name="Kieffer-Jaquinod S."/>
            <person name="Hugouvieux V."/>
            <person name="Bruley C."/>
            <person name="Garin J."/>
            <person name="Bourguignon J."/>
        </authorList>
    </citation>
    <scope>IDENTIFICATION BY MASS SPECTROMETRY</scope>
    <scope>SUBCELLULAR LOCATION [LARGE SCALE ANALYSIS]</scope>
</reference>
<reference key="17">
    <citation type="journal article" date="2010" name="Plant Cell Physiol.">
        <title>Quantification, organ-specific accumulation and intracellular localization of type II H(+)-pyrophosphatase in Arabidopsis thaliana.</title>
        <authorList>
            <person name="Segami S."/>
            <person name="Nakanishi Y."/>
            <person name="Sato M.H."/>
            <person name="Maeshima M."/>
        </authorList>
    </citation>
    <scope>CATALYTIC ACTIVITY</scope>
</reference>
<reference key="18">
    <citation type="journal article" date="2011" name="Plant Sci.">
        <title>Plasma membrane localization of the type I H(+)-PPase AVP1 in sieve element-companion cell complexes from Arabidopsis thaliana.</title>
        <authorList>
            <person name="Paez-Valencia J."/>
            <person name="Patron-Soberano A."/>
            <person name="Rodriguez-Leviz A."/>
            <person name="Sanchez-Lares J."/>
            <person name="Sanchez-Gomez C."/>
            <person name="Valencia-Mayoral P."/>
            <person name="Diaz-Rosas G."/>
            <person name="Gaxiola R."/>
        </authorList>
    </citation>
    <scope>SUBCELLULAR LOCATION</scope>
</reference>
<evidence type="ECO:0000250" key="1"/>
<evidence type="ECO:0000255" key="2"/>
<evidence type="ECO:0000269" key="3">
    <source>
    </source>
</evidence>
<evidence type="ECO:0000269" key="4">
    <source>
    </source>
</evidence>
<evidence type="ECO:0000269" key="5">
    <source>
    </source>
</evidence>
<evidence type="ECO:0000269" key="6">
    <source>
    </source>
</evidence>
<evidence type="ECO:0000269" key="7">
    <source>
    </source>
</evidence>
<evidence type="ECO:0000269" key="8">
    <source>
    </source>
</evidence>
<evidence type="ECO:0000269" key="9">
    <source>
    </source>
</evidence>
<evidence type="ECO:0000269" key="10">
    <source>
    </source>
</evidence>
<evidence type="ECO:0000269" key="11">
    <source>
    </source>
</evidence>
<evidence type="ECO:0000269" key="12">
    <source>
    </source>
</evidence>
<evidence type="ECO:0000269" key="13">
    <source>
    </source>
</evidence>
<evidence type="ECO:0000269" key="14">
    <source>
    </source>
</evidence>
<evidence type="ECO:0000305" key="15"/>
<dbReference type="EC" id="7.1.3.1" evidence="9"/>
<dbReference type="EMBL" id="M81892">
    <property type="protein sequence ID" value="AAA32754.1"/>
    <property type="molecule type" value="mRNA"/>
</dbReference>
<dbReference type="EMBL" id="AB015138">
    <property type="protein sequence ID" value="BAA32210.1"/>
    <property type="molecule type" value="Genomic_DNA"/>
</dbReference>
<dbReference type="EMBL" id="AC034256">
    <property type="protein sequence ID" value="AAF82139.1"/>
    <property type="molecule type" value="Genomic_DNA"/>
</dbReference>
<dbReference type="EMBL" id="CP002684">
    <property type="protein sequence ID" value="AEE29349.1"/>
    <property type="molecule type" value="Genomic_DNA"/>
</dbReference>
<dbReference type="EMBL" id="AY065016">
    <property type="protein sequence ID" value="AAL57660.1"/>
    <property type="molecule type" value="mRNA"/>
</dbReference>
<dbReference type="EMBL" id="AY078953">
    <property type="protein sequence ID" value="AAL84953.1"/>
    <property type="molecule type" value="mRNA"/>
</dbReference>
<dbReference type="EMBL" id="BT002481">
    <property type="protein sequence ID" value="AAO00841.1"/>
    <property type="molecule type" value="mRNA"/>
</dbReference>
<dbReference type="EMBL" id="Z17694">
    <property type="protein sequence ID" value="CAA79038.1"/>
    <property type="molecule type" value="mRNA"/>
</dbReference>
<dbReference type="EMBL" id="Z17695">
    <property type="protein sequence ID" value="CAA79039.1"/>
    <property type="status" value="ALT_FRAME"/>
    <property type="molecule type" value="mRNA"/>
</dbReference>
<dbReference type="EMBL" id="AK221989">
    <property type="protein sequence ID" value="BAD94555.1"/>
    <property type="status" value="ALT_INIT"/>
    <property type="molecule type" value="mRNA"/>
</dbReference>
<dbReference type="PIR" id="A38230">
    <property type="entry name" value="A38230"/>
</dbReference>
<dbReference type="RefSeq" id="NP_173021.1">
    <molecule id="P31414-1"/>
    <property type="nucleotide sequence ID" value="NM_101437.5"/>
</dbReference>
<dbReference type="SMR" id="P31414"/>
<dbReference type="BioGRID" id="23378">
    <property type="interactions" value="13"/>
</dbReference>
<dbReference type="FunCoup" id="P31414">
    <property type="interactions" value="783"/>
</dbReference>
<dbReference type="IntAct" id="P31414">
    <property type="interactions" value="10"/>
</dbReference>
<dbReference type="STRING" id="3702.P31414"/>
<dbReference type="TCDB" id="3.A.10.1.1">
    <property type="family name" value="the h(+), na(+)-translocating pyrophosphatase (m(+)-ppase) family"/>
</dbReference>
<dbReference type="iPTMnet" id="P31414"/>
<dbReference type="SwissPalm" id="P31414"/>
<dbReference type="PaxDb" id="3702-AT1G15690.1"/>
<dbReference type="ProteomicsDB" id="241153">
    <molecule id="P31414-1"/>
</dbReference>
<dbReference type="EnsemblPlants" id="AT1G15690.1">
    <molecule id="P31414-1"/>
    <property type="protein sequence ID" value="AT1G15690.1"/>
    <property type="gene ID" value="AT1G15690"/>
</dbReference>
<dbReference type="GeneID" id="838138"/>
<dbReference type="Gramene" id="AT1G15690.1">
    <molecule id="P31414-1"/>
    <property type="protein sequence ID" value="AT1G15690.1"/>
    <property type="gene ID" value="AT1G15690"/>
</dbReference>
<dbReference type="KEGG" id="ath:AT1G15690"/>
<dbReference type="Araport" id="AT1G15690"/>
<dbReference type="TAIR" id="AT1G15690">
    <property type="gene designation" value="AVP1"/>
</dbReference>
<dbReference type="eggNOG" id="ENOG502QPJC">
    <property type="taxonomic scope" value="Eukaryota"/>
</dbReference>
<dbReference type="HOGENOM" id="CLU_008743_3_0_1"/>
<dbReference type="InParanoid" id="P31414"/>
<dbReference type="OMA" id="FFEIKIV"/>
<dbReference type="OrthoDB" id="1071411at2759"/>
<dbReference type="PhylomeDB" id="P31414"/>
<dbReference type="BioCyc" id="ARA:AT1G15690-MONOMER"/>
<dbReference type="BioCyc" id="MetaCyc:AT1G15690-MONOMER"/>
<dbReference type="BRENDA" id="7.1.3.1">
    <property type="organism ID" value="399"/>
</dbReference>
<dbReference type="SABIO-RK" id="P31414"/>
<dbReference type="CD-CODE" id="4299E36E">
    <property type="entry name" value="Nucleolus"/>
</dbReference>
<dbReference type="PRO" id="PR:P31414"/>
<dbReference type="Proteomes" id="UP000006548">
    <property type="component" value="Chromosome 1"/>
</dbReference>
<dbReference type="ExpressionAtlas" id="P31414">
    <property type="expression patterns" value="baseline and differential"/>
</dbReference>
<dbReference type="GO" id="GO:0009507">
    <property type="term" value="C:chloroplast"/>
    <property type="evidence" value="ECO:0007005"/>
    <property type="project" value="TAIR"/>
</dbReference>
<dbReference type="GO" id="GO:0009941">
    <property type="term" value="C:chloroplast envelope"/>
    <property type="evidence" value="ECO:0007005"/>
    <property type="project" value="TAIR"/>
</dbReference>
<dbReference type="GO" id="GO:0010008">
    <property type="term" value="C:endosome membrane"/>
    <property type="evidence" value="ECO:0000314"/>
    <property type="project" value="TAIR"/>
</dbReference>
<dbReference type="GO" id="GO:0005576">
    <property type="term" value="C:extracellular region"/>
    <property type="evidence" value="ECO:0007005"/>
    <property type="project" value="TAIR"/>
</dbReference>
<dbReference type="GO" id="GO:0005794">
    <property type="term" value="C:Golgi apparatus"/>
    <property type="evidence" value="ECO:0007005"/>
    <property type="project" value="TAIR"/>
</dbReference>
<dbReference type="GO" id="GO:0005739">
    <property type="term" value="C:mitochondrion"/>
    <property type="evidence" value="ECO:0007005"/>
    <property type="project" value="TAIR"/>
</dbReference>
<dbReference type="GO" id="GO:0000325">
    <property type="term" value="C:plant-type vacuole"/>
    <property type="evidence" value="ECO:0007005"/>
    <property type="project" value="TAIR"/>
</dbReference>
<dbReference type="GO" id="GO:0009705">
    <property type="term" value="C:plant-type vacuole membrane"/>
    <property type="evidence" value="ECO:0000314"/>
    <property type="project" value="TAIR"/>
</dbReference>
<dbReference type="GO" id="GO:0005886">
    <property type="term" value="C:plasma membrane"/>
    <property type="evidence" value="ECO:0000314"/>
    <property type="project" value="TAIR"/>
</dbReference>
<dbReference type="GO" id="GO:0005774">
    <property type="term" value="C:vacuolar membrane"/>
    <property type="evidence" value="ECO:0007005"/>
    <property type="project" value="TAIR"/>
</dbReference>
<dbReference type="GO" id="GO:0005773">
    <property type="term" value="C:vacuole"/>
    <property type="evidence" value="ECO:0007005"/>
    <property type="project" value="TAIR"/>
</dbReference>
<dbReference type="GO" id="GO:0009678">
    <property type="term" value="F:diphosphate hydrolysis-driven proton transmembrane transporter activity"/>
    <property type="evidence" value="ECO:0000314"/>
    <property type="project" value="TAIR"/>
</dbReference>
<dbReference type="GO" id="GO:0004427">
    <property type="term" value="F:inorganic diphosphate phosphatase activity"/>
    <property type="evidence" value="ECO:0000314"/>
    <property type="project" value="TAIR"/>
</dbReference>
<dbReference type="GO" id="GO:0046872">
    <property type="term" value="F:metal ion binding"/>
    <property type="evidence" value="ECO:0007669"/>
    <property type="project" value="UniProtKB-KW"/>
</dbReference>
<dbReference type="GO" id="GO:0003729">
    <property type="term" value="F:mRNA binding"/>
    <property type="evidence" value="ECO:0000314"/>
    <property type="project" value="TAIR"/>
</dbReference>
<dbReference type="GO" id="GO:0009926">
    <property type="term" value="P:auxin polar transport"/>
    <property type="evidence" value="ECO:0000316"/>
    <property type="project" value="TAIR"/>
</dbReference>
<dbReference type="GO" id="GO:0052546">
    <property type="term" value="P:cell wall pectin metabolic process"/>
    <property type="evidence" value="ECO:0000315"/>
    <property type="project" value="TAIR"/>
</dbReference>
<dbReference type="GO" id="GO:0010248">
    <property type="term" value="P:establishment or maintenance of transmembrane electrochemical gradient"/>
    <property type="evidence" value="ECO:0000304"/>
    <property type="project" value="TAIR"/>
</dbReference>
<dbReference type="GO" id="GO:0048366">
    <property type="term" value="P:leaf development"/>
    <property type="evidence" value="ECO:0000315"/>
    <property type="project" value="TAIR"/>
</dbReference>
<dbReference type="GO" id="GO:2000904">
    <property type="term" value="P:regulation of starch metabolic process"/>
    <property type="evidence" value="ECO:0000315"/>
    <property type="project" value="TAIR"/>
</dbReference>
<dbReference type="GO" id="GO:0009651">
    <property type="term" value="P:response to salt stress"/>
    <property type="evidence" value="ECO:0000315"/>
    <property type="project" value="TAIR"/>
</dbReference>
<dbReference type="GO" id="GO:0009414">
    <property type="term" value="P:response to water deprivation"/>
    <property type="evidence" value="ECO:0000315"/>
    <property type="project" value="TAIR"/>
</dbReference>
<dbReference type="GO" id="GO:0005985">
    <property type="term" value="P:sucrose metabolic process"/>
    <property type="evidence" value="ECO:0000314"/>
    <property type="project" value="TAIR"/>
</dbReference>
<dbReference type="HAMAP" id="MF_01129">
    <property type="entry name" value="PPase_energized_pump"/>
    <property type="match status" value="1"/>
</dbReference>
<dbReference type="InterPro" id="IPR004131">
    <property type="entry name" value="PPase-energised_H-pump"/>
</dbReference>
<dbReference type="NCBIfam" id="NF001960">
    <property type="entry name" value="PRK00733.3-5"/>
    <property type="match status" value="1"/>
</dbReference>
<dbReference type="NCBIfam" id="TIGR01104">
    <property type="entry name" value="V_PPase"/>
    <property type="match status" value="1"/>
</dbReference>
<dbReference type="PANTHER" id="PTHR31998">
    <property type="entry name" value="K(+)-INSENSITIVE PYROPHOSPHATE-ENERGIZED PROTON PUMP"/>
    <property type="match status" value="1"/>
</dbReference>
<dbReference type="Pfam" id="PF03030">
    <property type="entry name" value="H_PPase"/>
    <property type="match status" value="1"/>
</dbReference>
<dbReference type="PIRSF" id="PIRSF001265">
    <property type="entry name" value="H+-PPase"/>
    <property type="match status" value="1"/>
</dbReference>
<organism>
    <name type="scientific">Arabidopsis thaliana</name>
    <name type="common">Mouse-ear cress</name>
    <dbReference type="NCBI Taxonomy" id="3702"/>
    <lineage>
        <taxon>Eukaryota</taxon>
        <taxon>Viridiplantae</taxon>
        <taxon>Streptophyta</taxon>
        <taxon>Embryophyta</taxon>
        <taxon>Tracheophyta</taxon>
        <taxon>Spermatophyta</taxon>
        <taxon>Magnoliopsida</taxon>
        <taxon>eudicotyledons</taxon>
        <taxon>Gunneridae</taxon>
        <taxon>Pentapetalae</taxon>
        <taxon>rosids</taxon>
        <taxon>malvids</taxon>
        <taxon>Brassicales</taxon>
        <taxon>Brassicaceae</taxon>
        <taxon>Camelineae</taxon>
        <taxon>Arabidopsis</taxon>
    </lineage>
</organism>
<accession>P31414</accession>
<accession>O80390</accession>
<accession>Q41919</accession>
<accession>Q41920</accession>
<accession>Q56WP6</accession>
<accession>Q8RY20</accession>
<accession>Q8VZE3</accession>
<sequence length="770" mass="80820">MVAPALLPELWTEILVPICAVIGIAFSLFQWYVVSRVKLTSDLGASSSGGANNGKNGYGDYLIEEEEGVNDQSVVAKCAEIQTAISEGATSFLFTEYKYVGVFMIFFAAVIFVFLGSVEGFSTDNKPCTYDTTRTCKPALATAAFSTIAFVLGAVTSVLSGFLGMKIATYANARTTLEARKGVGKAFIVAFRSGAVMGFLLAASGLLVLYITINVFKIYYGDDWEGLFEAITGYGLGGSSMALFGRVGGGIYTKAADVGADLVGKIERNIPEDDPRNPAVIADNVGDNVGDIAGMGSDLFGSYAEASCAALVVASISSFGINHDFTAMCYPLLISSMGILVCLITTLFATDFFEIKLVKEIEPALKNQLIISTVIMTVGIAIVSWVGLPTSFTIFNFGTQKVVKNWQLFLCVCVGLWAGLIIGFVTEYYTSNAYSPVQDVADSCRTGAATNVIFGLALGYKSVIIPIFAIAISIFVSFSFAAMYGVAVAALGMLSTIATGLAIDAYGPISDNAGGIAEMAGMSHRIRERTDALDAAGNTTAAIGKGFAIGSAALVSLALFGAFVSRAGIHTVDVLTPKVIIGLLVGAMLPYWFSAMTMKSVGSAALKMVEEVRRQFNTIPGLMEGTAKPDYATCVKISTDASIKEMIPPGCLVMLTPLIVGFFFGVETLSGVLAGSLVSGVQIAISASNTGGAWDNAKKYIEAGVSEHAKSLGPKGSEPHKAAVIGDTIGDPLKDTSGPSLNILIKLMAVESLVFAPFFATHGGILFKYF</sequence>
<keyword id="KW-0025">Alternative splicing</keyword>
<keyword id="KW-1003">Cell membrane</keyword>
<keyword id="KW-0903">Direct protein sequencing</keyword>
<keyword id="KW-1015">Disulfide bond</keyword>
<keyword id="KW-0967">Endosome</keyword>
<keyword id="KW-0375">Hydrogen ion transport</keyword>
<keyword id="KW-0406">Ion transport</keyword>
<keyword id="KW-0460">Magnesium</keyword>
<keyword id="KW-0472">Membrane</keyword>
<keyword id="KW-0479">Metal-binding</keyword>
<keyword id="KW-1185">Reference proteome</keyword>
<keyword id="KW-1278">Translocase</keyword>
<keyword id="KW-0812">Transmembrane</keyword>
<keyword id="KW-1133">Transmembrane helix</keyword>
<keyword id="KW-0813">Transport</keyword>
<keyword id="KW-0926">Vacuole</keyword>
<feature type="chain" id="PRO_0000217039" description="Pyrophosphate-energized vacuolar membrane proton pump 1">
    <location>
        <begin position="1"/>
        <end position="770"/>
    </location>
</feature>
<feature type="topological domain" description="Intravacuolar" evidence="1">
    <location>
        <begin position="1"/>
        <end position="9"/>
    </location>
</feature>
<feature type="transmembrane region" description="Helical" evidence="1">
    <location>
        <begin position="10"/>
        <end position="36"/>
    </location>
</feature>
<feature type="topological domain" description="Cytoplasmic" evidence="1">
    <location>
        <begin position="37"/>
        <end position="88"/>
    </location>
</feature>
<feature type="transmembrane region" description="Helical" evidence="1">
    <location>
        <begin position="89"/>
        <end position="118"/>
    </location>
</feature>
<feature type="topological domain" description="Intravacuolar" evidence="1">
    <location>
        <begin position="119"/>
        <end position="139"/>
    </location>
</feature>
<feature type="transmembrane region" description="Helical" evidence="1">
    <location>
        <begin position="140"/>
        <end position="167"/>
    </location>
</feature>
<feature type="topological domain" description="Cytoplasmic" evidence="1">
    <location>
        <begin position="168"/>
        <end position="190"/>
    </location>
</feature>
<feature type="transmembrane region" description="Helical" evidence="1">
    <location>
        <begin position="191"/>
        <end position="220"/>
    </location>
</feature>
<feature type="topological domain" description="Intravacuolar" evidence="1">
    <location>
        <begin position="221"/>
        <end position="223"/>
    </location>
</feature>
<feature type="transmembrane region" description="Helical" evidence="1">
    <location>
        <begin position="224"/>
        <end position="252"/>
    </location>
</feature>
<feature type="topological domain" description="Cytoplasmic" evidence="1">
    <location>
        <begin position="253"/>
        <end position="290"/>
    </location>
</feature>
<feature type="transmembrane region" description="Helical" evidence="1">
    <location>
        <begin position="291"/>
        <end position="316"/>
    </location>
</feature>
<feature type="topological domain" description="Intravacuolar" evidence="1">
    <location>
        <begin position="317"/>
        <end position="324"/>
    </location>
</feature>
<feature type="transmembrane region" description="Helical" evidence="1">
    <location>
        <begin position="325"/>
        <end position="350"/>
    </location>
</feature>
<feature type="topological domain" description="Cytoplasmic" evidence="1">
    <location>
        <begin position="351"/>
        <end position="358"/>
    </location>
</feature>
<feature type="transmembrane region" description="Helical" evidence="1">
    <location>
        <begin position="359"/>
        <end position="386"/>
    </location>
</feature>
<feature type="topological domain" description="Intravacuolar" evidence="1">
    <location>
        <begin position="387"/>
        <end position="405"/>
    </location>
</feature>
<feature type="transmembrane region" description="Helical" evidence="1">
    <location>
        <begin position="406"/>
        <end position="429"/>
    </location>
</feature>
<feature type="topological domain" description="Cytoplasmic" evidence="1">
    <location>
        <begin position="430"/>
        <end position="451"/>
    </location>
</feature>
<feature type="transmembrane region" description="Helical" evidence="1">
    <location>
        <begin position="452"/>
        <end position="476"/>
    </location>
</feature>
<feature type="topological domain" description="Intravacuolar" evidence="1">
    <location>
        <begin position="477"/>
        <end position="482"/>
    </location>
</feature>
<feature type="transmembrane region" description="Helical" evidence="1">
    <location>
        <begin position="483"/>
        <end position="509"/>
    </location>
</feature>
<feature type="topological domain" description="Cytoplasmic" evidence="1">
    <location>
        <begin position="510"/>
        <end position="538"/>
    </location>
</feature>
<feature type="transmembrane region" description="Helical" evidence="1">
    <location>
        <begin position="539"/>
        <end position="567"/>
    </location>
</feature>
<feature type="topological domain" description="Intravacuolar" evidence="1">
    <location>
        <begin position="568"/>
        <end position="577"/>
    </location>
</feature>
<feature type="transmembrane region" description="Helical" evidence="1">
    <location>
        <begin position="578"/>
        <end position="606"/>
    </location>
</feature>
<feature type="topological domain" description="Cytoplasmic" evidence="1">
    <location>
        <begin position="607"/>
        <end position="635"/>
    </location>
</feature>
<feature type="transmembrane region" description="Helical" evidence="1">
    <location>
        <begin position="636"/>
        <end position="664"/>
    </location>
</feature>
<feature type="topological domain" description="Intravacuolar" evidence="1">
    <location>
        <position position="665"/>
    </location>
</feature>
<feature type="transmembrane region" description="Helical" evidence="1">
    <location>
        <begin position="666"/>
        <end position="693"/>
    </location>
</feature>
<feature type="topological domain" description="Cytoplasmic" evidence="1">
    <location>
        <begin position="694"/>
        <end position="736"/>
    </location>
</feature>
<feature type="transmembrane region" description="Helical" evidence="1">
    <location>
        <begin position="737"/>
        <end position="762"/>
    </location>
</feature>
<feature type="topological domain" description="Intravacuolar" evidence="1">
    <location>
        <begin position="763"/>
        <end position="770"/>
    </location>
</feature>
<feature type="binding site" evidence="1">
    <location>
        <position position="254"/>
    </location>
    <ligand>
        <name>substrate</name>
    </ligand>
</feature>
<feature type="binding site" evidence="1">
    <location>
        <position position="257"/>
    </location>
    <ligand>
        <name>Mg(2+)</name>
        <dbReference type="ChEBI" id="CHEBI:18420"/>
        <label>1</label>
    </ligand>
</feature>
<feature type="binding site" evidence="1">
    <location>
        <position position="257"/>
    </location>
    <ligand>
        <name>Mg(2+)</name>
        <dbReference type="ChEBI" id="CHEBI:18420"/>
        <label>2</label>
    </ligand>
</feature>
<feature type="binding site" evidence="1">
    <location>
        <position position="261"/>
    </location>
    <ligand>
        <name>Mg(2+)</name>
        <dbReference type="ChEBI" id="CHEBI:18420"/>
        <label>1</label>
    </ligand>
</feature>
<feature type="binding site" evidence="1">
    <location>
        <position position="287"/>
    </location>
    <ligand>
        <name>Mg(2+)</name>
        <dbReference type="ChEBI" id="CHEBI:18420"/>
        <label>3</label>
    </ligand>
</feature>
<feature type="binding site" evidence="1">
    <location>
        <position position="511"/>
    </location>
    <ligand>
        <name>Mg(2+)</name>
        <dbReference type="ChEBI" id="CHEBI:18420"/>
        <label>3</label>
    </ligand>
</feature>
<feature type="binding site" evidence="1">
    <location>
        <position position="538"/>
    </location>
    <ligand>
        <name>Mg(2+)</name>
        <dbReference type="ChEBI" id="CHEBI:18420"/>
        <label>4</label>
    </ligand>
</feature>
<feature type="binding site" evidence="1">
    <location>
        <position position="695"/>
    </location>
    <ligand>
        <name>Mg(2+)</name>
        <dbReference type="ChEBI" id="CHEBI:18420"/>
        <label>4</label>
    </ligand>
</feature>
<feature type="binding site" evidence="1">
    <location>
        <position position="731"/>
    </location>
    <ligand>
        <name>Mg(2+)</name>
        <dbReference type="ChEBI" id="CHEBI:18420"/>
        <label>2</label>
    </ligand>
</feature>
<feature type="binding site" evidence="1">
    <location>
        <position position="734"/>
    </location>
    <ligand>
        <name>substrate</name>
    </ligand>
</feature>
<feature type="site" description="Important for proton transport" evidence="1">
    <location>
        <position position="246"/>
    </location>
</feature>
<feature type="site" description="Important for proton transport" evidence="1">
    <location>
        <position position="291"/>
    </location>
</feature>
<feature type="site" description="Important for proton transport" evidence="1">
    <location>
        <position position="298"/>
    </location>
</feature>
<feature type="site" description="Important for proton transport" evidence="1">
    <location>
        <position position="305"/>
    </location>
</feature>
<feature type="site" description="Important for proton transport" evidence="1">
    <location>
        <position position="735"/>
    </location>
</feature>
<feature type="site" description="Important for proton transport" evidence="1">
    <location>
        <position position="746"/>
    </location>
</feature>
<feature type="disulfide bond" evidence="1">
    <location>
        <begin position="128"/>
        <end position="136"/>
    </location>
</feature>
<feature type="mutagenesis site" description="Slight reduction of PPi hydrolysis and H(+) translocation." evidence="14">
    <original>E</original>
    <variation>Q</variation>
    <location>
        <position position="119"/>
    </location>
</feature>
<feature type="mutagenesis site" description="Slight increased PPi hydrolysis and H(+) translocation." evidence="14">
    <original>E</original>
    <variation>D</variation>
    <location>
        <position position="229"/>
    </location>
</feature>
<feature type="mutagenesis site" description="Slight reduction of PPi hydrolysis and H(+) translocation." evidence="14">
    <original>E</original>
    <variation>Q</variation>
    <location>
        <position position="229"/>
    </location>
</feature>
<feature type="mutagenesis site" description="Abolishes H(+) translocation and strong reduction of PPi hydrolysis." evidence="14">
    <original>E</original>
    <variation>D</variation>
    <location>
        <position position="305"/>
    </location>
</feature>
<feature type="mutagenesis site" description="Abolishes H(+) translocation and strong reduction of PPi hydrolysis, reduced sensitivity to DCCD." evidence="14">
    <original>E</original>
    <variation>Q</variation>
    <location>
        <position position="305"/>
    </location>
</feature>
<feature type="mutagenesis site" description="Increases H(+) translocation, normal PPi hydrolysis." evidence="14">
    <original>E</original>
    <variation>D</variation>
    <location>
        <position position="427"/>
    </location>
</feature>
<feature type="mutagenesis site" description="Strong reduction of PPi hydrolysis and H(+) translocation." evidence="14">
    <original>E</original>
    <variation>Q</variation>
    <location>
        <position position="427"/>
    </location>
</feature>
<feature type="mutagenesis site" description="Abolishes H(+) translocation and strong reduction of PPi hydrolysis." evidence="14">
    <original>D</original>
    <variation>E</variation>
    <location>
        <position position="504"/>
    </location>
</feature>
<feature type="mutagenesis site" description="Abolishes H(+) translocation and strong reduction of PPi hydrolysis, reduced sensitivity to DCCD." evidence="14">
    <original>D</original>
    <variation>N</variation>
    <location>
        <position position="504"/>
    </location>
</feature>
<feature type="mutagenesis site" description="Increases H(+) translocation, normal PPi hydrolysis." evidence="14">
    <original>D</original>
    <variation>N</variation>
    <location>
        <position position="573"/>
    </location>
</feature>
<feature type="mutagenesis site" description="Reduced sensitivity to NEM." evidence="11">
    <original>C</original>
    <variation>A</variation>
    <variation>S</variation>
    <location>
        <position position="634"/>
    </location>
</feature>
<feature type="mutagenesis site" description="Slight reduction of PPi hydrolysis and H(+) translocation." evidence="14">
    <original>E</original>
    <variation>Q</variation>
    <location>
        <position position="667"/>
    </location>
</feature>
<feature type="mutagenesis site" description="Slight reduction of PPi hydrolysis and H(+) translocation." evidence="14">
    <original>E</original>
    <variation>Q</variation>
    <location>
        <position position="751"/>
    </location>
</feature>
<feature type="sequence conflict" description="In Ref. 2; BAA32210." evidence="15" ref="2">
    <original>P</original>
    <variation>L</variation>
    <location>
        <position position="8"/>
    </location>
</feature>
<feature type="sequence conflict" description="In Ref. 6; CAA79038." evidence="15" ref="6">
    <original>T</original>
    <variation>A</variation>
    <location>
        <position position="576"/>
    </location>
</feature>
<feature type="sequence conflict" description="In Ref. 6; CAA79038." evidence="15" ref="6">
    <original>L</original>
    <variation>P</variation>
    <location>
        <position position="584"/>
    </location>
</feature>
<feature type="sequence conflict" description="In Ref. 5; AAL57660." evidence="15" ref="5">
    <original>E</original>
    <variation>K</variation>
    <location>
        <position position="624"/>
    </location>
</feature>
<feature type="sequence conflict" description="In Ref. 5; AAL84953." evidence="15" ref="5">
    <original>I</original>
    <variation>T</variation>
    <location>
        <position position="685"/>
    </location>
</feature>
<comment type="function">
    <text evidence="5 7 12">Contributes to the transtonoplast (from cytosol to vacuole lumen) H(+)-electrochemical potential difference. It establishes a proton gradient of similar and often greater magnitude than the H(+)-ATPase on the same membrane. In addition, facilitates auxin transport by modulating apoplastic pH and regulates auxin-mediated developmental processes. Confers tolerance to NaCl and to drought by increasing ion retention.</text>
</comment>
<comment type="catalytic activity">
    <reaction evidence="9">
        <text>diphosphate + H2O + H(+)(in) = 2 phosphate + 2 H(+)(out)</text>
        <dbReference type="Rhea" id="RHEA:13973"/>
        <dbReference type="ChEBI" id="CHEBI:15377"/>
        <dbReference type="ChEBI" id="CHEBI:15378"/>
        <dbReference type="ChEBI" id="CHEBI:33019"/>
        <dbReference type="ChEBI" id="CHEBI:43474"/>
        <dbReference type="EC" id="7.1.3.1"/>
    </reaction>
</comment>
<comment type="activity regulation">
    <text evidence="3 12 13 14">Activated by K(+) and Mg(2+). Inhibited by Ca(2+), N,N'-dicyclohexylcarbodiimide (DCCD), N-ethylmaleimide (NEM) and aminomethylenediphosphonate (AMDP), and, to a lower extent, by fluoride (KF).</text>
</comment>
<comment type="biophysicochemical properties">
    <kinetics>
        <KM evidence="3 11">110 uM for PPi (at pH 8 and 37 degrees Celsius)</KM>
        <Vmax evidence="3 11">0.5 umol/min/mg enzyme (at pH 8 and 37 degrees Celsius)</Vmax>
    </kinetics>
</comment>
<comment type="subunit">
    <text>Monomer.</text>
</comment>
<comment type="subcellular location">
    <subcellularLocation>
        <location evidence="8">Vacuole membrane</location>
        <topology evidence="2">Multi-pass membrane protein</topology>
    </subcellularLocation>
    <subcellularLocation>
        <location>Endosome membrane</location>
        <topology evidence="2">Multi-pass membrane protein</topology>
    </subcellularLocation>
    <subcellularLocation>
        <location evidence="10">Cell membrane</location>
        <topology evidence="2">Multi-pass membrane protein</topology>
    </subcellularLocation>
    <text evidence="8 10">Mostly vacuolar, tonoplast (PubMed:17151019). Also present in endosomes and plasma membrane (PubMed:21600394). Localizes in sieve element-companion cell complexes (PubMed:21600394).</text>
</comment>
<comment type="alternative products">
    <event type="alternative splicing"/>
    <isoform>
        <id>P31414-1</id>
        <name>1</name>
        <sequence type="displayed"/>
    </isoform>
    <text>A number of isoforms are produced. According to EST sequences.</text>
</comment>
<comment type="tissue specificity">
    <text evidence="4 7">Ubiquitous (at protein level). Mostly expressed in vascular tissues, meristems and root pericycle.</text>
</comment>
<comment type="developmental stage">
    <text evidence="4 7">Increase of expression in pollen during flower development. Expressed in developing leaves, sepals, petals, stamens and carpels.</text>
</comment>
<comment type="induction">
    <text evidence="4 6">Repressed by light. Induced by CAMTA1 and/or CAMTA5 in pollen.</text>
</comment>
<comment type="domain">
    <text evidence="1">Has 16 transmembrane helices and a cytoplasmic domain that contains the active site.</text>
</comment>
<comment type="miscellaneous">
    <text evidence="1">Has few direct interactions with pyrophosphate. Interacts with the substrate via divalent metal cations, such as magnesium ions, that are bound to the pyrophosphate (By similarity).</text>
</comment>
<comment type="similarity">
    <text evidence="15">Belongs to the H(+)-translocating pyrophosphatase (TC 3.A.10) family. K(+)-stimulated subfamily.</text>
</comment>
<comment type="sequence caution" evidence="15">
    <conflict type="erroneous initiation">
        <sequence resource="EMBL-CDS" id="BAD94555"/>
    </conflict>
</comment>
<comment type="sequence caution" evidence="15">
    <conflict type="frameshift">
        <sequence resource="EMBL-CDS" id="CAA79039"/>
    </conflict>
</comment>
<gene>
    <name type="primary">AVP1</name>
    <name type="synonym">AVP</name>
    <name type="synonym">AVP-3</name>
    <name type="synonym">AVP3</name>
    <name type="ordered locus">At1g15690</name>
    <name type="ORF">F7H2.3</name>
</gene>